<evidence type="ECO:0000255" key="1">
    <source>
        <dbReference type="HAMAP-Rule" id="MF_00160"/>
    </source>
</evidence>
<name>SERC_METMA</name>
<proteinExistence type="inferred from homology"/>
<accession>Q8PT12</accession>
<gene>
    <name evidence="1" type="primary">serC</name>
    <name type="ordered locus">MM_2911</name>
</gene>
<dbReference type="EC" id="2.6.1.52" evidence="1"/>
<dbReference type="EMBL" id="AE008384">
    <property type="protein sequence ID" value="AAM32607.1"/>
    <property type="molecule type" value="Genomic_DNA"/>
</dbReference>
<dbReference type="RefSeq" id="WP_011034813.1">
    <property type="nucleotide sequence ID" value="NC_003901.1"/>
</dbReference>
<dbReference type="SMR" id="Q8PT12"/>
<dbReference type="KEGG" id="mma:MM_2911"/>
<dbReference type="PATRIC" id="fig|192952.21.peg.3364"/>
<dbReference type="eggNOG" id="arCOG00083">
    <property type="taxonomic scope" value="Archaea"/>
</dbReference>
<dbReference type="HOGENOM" id="CLU_040283_0_0_2"/>
<dbReference type="UniPathway" id="UPA00135">
    <property type="reaction ID" value="UER00197"/>
</dbReference>
<dbReference type="UniPathway" id="UPA00244">
    <property type="reaction ID" value="UER00311"/>
</dbReference>
<dbReference type="Proteomes" id="UP000000595">
    <property type="component" value="Chromosome"/>
</dbReference>
<dbReference type="GO" id="GO:0005737">
    <property type="term" value="C:cytoplasm"/>
    <property type="evidence" value="ECO:0007669"/>
    <property type="project" value="UniProtKB-SubCell"/>
</dbReference>
<dbReference type="GO" id="GO:0004648">
    <property type="term" value="F:O-phospho-L-serine:2-oxoglutarate aminotransferase activity"/>
    <property type="evidence" value="ECO:0007669"/>
    <property type="project" value="UniProtKB-UniRule"/>
</dbReference>
<dbReference type="GO" id="GO:0030170">
    <property type="term" value="F:pyridoxal phosphate binding"/>
    <property type="evidence" value="ECO:0007669"/>
    <property type="project" value="UniProtKB-UniRule"/>
</dbReference>
<dbReference type="GO" id="GO:0006564">
    <property type="term" value="P:L-serine biosynthetic process"/>
    <property type="evidence" value="ECO:0007669"/>
    <property type="project" value="UniProtKB-UniRule"/>
</dbReference>
<dbReference type="GO" id="GO:0008615">
    <property type="term" value="P:pyridoxine biosynthetic process"/>
    <property type="evidence" value="ECO:0007669"/>
    <property type="project" value="UniProtKB-UniRule"/>
</dbReference>
<dbReference type="CDD" id="cd01494">
    <property type="entry name" value="AAT_I"/>
    <property type="match status" value="1"/>
</dbReference>
<dbReference type="Gene3D" id="3.90.1150.10">
    <property type="entry name" value="Aspartate Aminotransferase, domain 1"/>
    <property type="match status" value="1"/>
</dbReference>
<dbReference type="Gene3D" id="3.40.640.10">
    <property type="entry name" value="Type I PLP-dependent aspartate aminotransferase-like (Major domain)"/>
    <property type="match status" value="1"/>
</dbReference>
<dbReference type="HAMAP" id="MF_00160">
    <property type="entry name" value="SerC_aminotrans_5"/>
    <property type="match status" value="1"/>
</dbReference>
<dbReference type="InterPro" id="IPR022278">
    <property type="entry name" value="Pser_aminoTfrase"/>
</dbReference>
<dbReference type="InterPro" id="IPR006271">
    <property type="entry name" value="Pser_aminoTfrase_methanosarc"/>
</dbReference>
<dbReference type="InterPro" id="IPR015424">
    <property type="entry name" value="PyrdxlP-dep_Trfase"/>
</dbReference>
<dbReference type="InterPro" id="IPR015421">
    <property type="entry name" value="PyrdxlP-dep_Trfase_major"/>
</dbReference>
<dbReference type="InterPro" id="IPR015422">
    <property type="entry name" value="PyrdxlP-dep_Trfase_small"/>
</dbReference>
<dbReference type="NCBIfam" id="NF002841">
    <property type="entry name" value="PRK03080.1-2"/>
    <property type="match status" value="1"/>
</dbReference>
<dbReference type="NCBIfam" id="TIGR01365">
    <property type="entry name" value="serC_2"/>
    <property type="match status" value="1"/>
</dbReference>
<dbReference type="PANTHER" id="PTHR21152:SF40">
    <property type="entry name" value="ALANINE--GLYOXYLATE AMINOTRANSFERASE"/>
    <property type="match status" value="1"/>
</dbReference>
<dbReference type="PANTHER" id="PTHR21152">
    <property type="entry name" value="AMINOTRANSFERASE CLASS V"/>
    <property type="match status" value="1"/>
</dbReference>
<dbReference type="PIRSF" id="PIRSF000525">
    <property type="entry name" value="SerC"/>
    <property type="match status" value="1"/>
</dbReference>
<dbReference type="SUPFAM" id="SSF53383">
    <property type="entry name" value="PLP-dependent transferases"/>
    <property type="match status" value="1"/>
</dbReference>
<sequence length="370" mass="41596">MKPTRVPKNPCFSSGPCAKHPGYSIEDLNDAPFGRSHRSKPGKEKLAEAIKRTRDMLGLPSDYLVGIVPASDTGAFEMCLWSMLGCRGVDVLVWESFSKEWATDITKQLKLKDTRVFEAEYGKLPDLENVDFKNDVVFVWNGTTSGVKVPNGDWIPDSREGLTLCDATSAVFAMDIPYHKLDVLTFSWQKVLGGEGAHGMLILSPRAVQRLESYTPAWPLPKIFRLTKGGKLNKEIFEGSTINTPSMLANEDWLATLKWAESVGGLKQLIQRTNENLAVFEAFVAKNNWIHFLAETKEIRSSTSVCFKVDLSEEKLKELIKMLENEKVAYDIGSYRDAPSGLRIWCGATIEKEDLECLCEWIEWAYDLVK</sequence>
<organism>
    <name type="scientific">Methanosarcina mazei (strain ATCC BAA-159 / DSM 3647 / Goe1 / Go1 / JCM 11833 / OCM 88)</name>
    <name type="common">Methanosarcina frisia</name>
    <dbReference type="NCBI Taxonomy" id="192952"/>
    <lineage>
        <taxon>Archaea</taxon>
        <taxon>Methanobacteriati</taxon>
        <taxon>Methanobacteriota</taxon>
        <taxon>Stenosarchaea group</taxon>
        <taxon>Methanomicrobia</taxon>
        <taxon>Methanosarcinales</taxon>
        <taxon>Methanosarcinaceae</taxon>
        <taxon>Methanosarcina</taxon>
    </lineage>
</organism>
<protein>
    <recommendedName>
        <fullName evidence="1">Phosphoserine aminotransferase</fullName>
        <ecNumber evidence="1">2.6.1.52</ecNumber>
    </recommendedName>
    <alternativeName>
        <fullName evidence="1">Phosphohydroxythreonine aminotransferase</fullName>
        <shortName evidence="1">PSAT</shortName>
    </alternativeName>
</protein>
<keyword id="KW-0028">Amino-acid biosynthesis</keyword>
<keyword id="KW-0032">Aminotransferase</keyword>
<keyword id="KW-0963">Cytoplasm</keyword>
<keyword id="KW-0663">Pyridoxal phosphate</keyword>
<keyword id="KW-0664">Pyridoxine biosynthesis</keyword>
<keyword id="KW-0718">Serine biosynthesis</keyword>
<keyword id="KW-0808">Transferase</keyword>
<feature type="chain" id="PRO_0000150231" description="Phosphoserine aminotransferase">
    <location>
        <begin position="1"/>
        <end position="370"/>
    </location>
</feature>
<feature type="binding site" evidence="1">
    <location>
        <position position="38"/>
    </location>
    <ligand>
        <name>L-glutamate</name>
        <dbReference type="ChEBI" id="CHEBI:29985"/>
    </ligand>
</feature>
<feature type="binding site" evidence="1">
    <location>
        <position position="101"/>
    </location>
    <ligand>
        <name>pyridoxal 5'-phosphate</name>
        <dbReference type="ChEBI" id="CHEBI:597326"/>
    </ligand>
</feature>
<feature type="binding site" evidence="1">
    <location>
        <position position="143"/>
    </location>
    <ligand>
        <name>pyridoxal 5'-phosphate</name>
        <dbReference type="ChEBI" id="CHEBI:597326"/>
    </ligand>
</feature>
<feature type="binding site" evidence="1">
    <location>
        <position position="166"/>
    </location>
    <ligand>
        <name>pyridoxal 5'-phosphate</name>
        <dbReference type="ChEBI" id="CHEBI:597326"/>
    </ligand>
</feature>
<feature type="binding site" evidence="1">
    <location>
        <position position="189"/>
    </location>
    <ligand>
        <name>pyridoxal 5'-phosphate</name>
        <dbReference type="ChEBI" id="CHEBI:597326"/>
    </ligand>
</feature>
<feature type="binding site" evidence="1">
    <location>
        <begin position="243"/>
        <end position="244"/>
    </location>
    <ligand>
        <name>pyridoxal 5'-phosphate</name>
        <dbReference type="ChEBI" id="CHEBI:597326"/>
    </ligand>
</feature>
<feature type="modified residue" description="N6-(pyridoxal phosphate)lysine" evidence="1">
    <location>
        <position position="190"/>
    </location>
</feature>
<comment type="function">
    <text evidence="1">Catalyzes the reversible conversion of 3-phosphohydroxypyruvate to phosphoserine and of 3-hydroxy-2-oxo-4-phosphonooxybutanoate to phosphohydroxythreonine.</text>
</comment>
<comment type="catalytic activity">
    <reaction evidence="1">
        <text>O-phospho-L-serine + 2-oxoglutarate = 3-phosphooxypyruvate + L-glutamate</text>
        <dbReference type="Rhea" id="RHEA:14329"/>
        <dbReference type="ChEBI" id="CHEBI:16810"/>
        <dbReference type="ChEBI" id="CHEBI:18110"/>
        <dbReference type="ChEBI" id="CHEBI:29985"/>
        <dbReference type="ChEBI" id="CHEBI:57524"/>
        <dbReference type="EC" id="2.6.1.52"/>
    </reaction>
</comment>
<comment type="catalytic activity">
    <reaction evidence="1">
        <text>4-(phosphooxy)-L-threonine + 2-oxoglutarate = (R)-3-hydroxy-2-oxo-4-phosphooxybutanoate + L-glutamate</text>
        <dbReference type="Rhea" id="RHEA:16573"/>
        <dbReference type="ChEBI" id="CHEBI:16810"/>
        <dbReference type="ChEBI" id="CHEBI:29985"/>
        <dbReference type="ChEBI" id="CHEBI:58452"/>
        <dbReference type="ChEBI" id="CHEBI:58538"/>
        <dbReference type="EC" id="2.6.1.52"/>
    </reaction>
</comment>
<comment type="cofactor">
    <cofactor evidence="1">
        <name>pyridoxal 5'-phosphate</name>
        <dbReference type="ChEBI" id="CHEBI:597326"/>
    </cofactor>
    <text evidence="1">Binds 1 pyridoxal phosphate per subunit.</text>
</comment>
<comment type="pathway">
    <text evidence="1">Amino-acid biosynthesis; L-serine biosynthesis; L-serine from 3-phospho-D-glycerate: step 2/3.</text>
</comment>
<comment type="pathway">
    <text evidence="1">Cofactor biosynthesis; pyridoxine 5'-phosphate biosynthesis; pyridoxine 5'-phosphate from D-erythrose 4-phosphate: step 3/5.</text>
</comment>
<comment type="subunit">
    <text evidence="1">Homodimer.</text>
</comment>
<comment type="subcellular location">
    <subcellularLocation>
        <location evidence="1">Cytoplasm</location>
    </subcellularLocation>
</comment>
<comment type="similarity">
    <text evidence="1">Belongs to the class-V pyridoxal-phosphate-dependent aminotransferase family. SerC subfamily.</text>
</comment>
<reference key="1">
    <citation type="journal article" date="2002" name="J. Mol. Microbiol. Biotechnol.">
        <title>The genome of Methanosarcina mazei: evidence for lateral gene transfer between Bacteria and Archaea.</title>
        <authorList>
            <person name="Deppenmeier U."/>
            <person name="Johann A."/>
            <person name="Hartsch T."/>
            <person name="Merkl R."/>
            <person name="Schmitz R.A."/>
            <person name="Martinez-Arias R."/>
            <person name="Henne A."/>
            <person name="Wiezer A."/>
            <person name="Baeumer S."/>
            <person name="Jacobi C."/>
            <person name="Brueggemann H."/>
            <person name="Lienard T."/>
            <person name="Christmann A."/>
            <person name="Boemecke M."/>
            <person name="Steckel S."/>
            <person name="Bhattacharyya A."/>
            <person name="Lykidis A."/>
            <person name="Overbeek R."/>
            <person name="Klenk H.-P."/>
            <person name="Gunsalus R.P."/>
            <person name="Fritz H.-J."/>
            <person name="Gottschalk G."/>
        </authorList>
    </citation>
    <scope>NUCLEOTIDE SEQUENCE [LARGE SCALE GENOMIC DNA]</scope>
    <source>
        <strain>ATCC BAA-159 / DSM 3647 / Goe1 / Go1 / JCM 11833 / OCM 88</strain>
    </source>
</reference>